<name>PURA_NEUCR</name>
<feature type="chain" id="PRO_0000399347" description="Adenylosuccinate synthetase">
    <location>
        <begin position="1"/>
        <end position="430"/>
    </location>
</feature>
<feature type="active site" description="Proton acceptor" evidence="2">
    <location>
        <position position="12"/>
    </location>
</feature>
<feature type="active site" description="Proton donor" evidence="2">
    <location>
        <position position="40"/>
    </location>
</feature>
<feature type="binding site" evidence="2">
    <location>
        <begin position="11"/>
        <end position="17"/>
    </location>
    <ligand>
        <name>GTP</name>
        <dbReference type="ChEBI" id="CHEBI:37565"/>
    </ligand>
</feature>
<feature type="binding site" description="in other chain" evidence="2">
    <location>
        <begin position="12"/>
        <end position="15"/>
    </location>
    <ligand>
        <name>IMP</name>
        <dbReference type="ChEBI" id="CHEBI:58053"/>
        <note>ligand shared between dimeric partners</note>
    </ligand>
</feature>
<feature type="binding site" evidence="2">
    <location>
        <position position="12"/>
    </location>
    <ligand>
        <name>Mg(2+)</name>
        <dbReference type="ChEBI" id="CHEBI:18420"/>
    </ligand>
</feature>
<feature type="binding site" description="in other chain" evidence="2">
    <location>
        <begin position="37"/>
        <end position="40"/>
    </location>
    <ligand>
        <name>IMP</name>
        <dbReference type="ChEBI" id="CHEBI:58053"/>
        <note>ligand shared between dimeric partners</note>
    </ligand>
</feature>
<feature type="binding site" evidence="2">
    <location>
        <begin position="39"/>
        <end position="41"/>
    </location>
    <ligand>
        <name>GTP</name>
        <dbReference type="ChEBI" id="CHEBI:37565"/>
    </ligand>
</feature>
<feature type="binding site" evidence="2">
    <location>
        <position position="39"/>
    </location>
    <ligand>
        <name>Mg(2+)</name>
        <dbReference type="ChEBI" id="CHEBI:18420"/>
    </ligand>
</feature>
<feature type="binding site" description="in other chain" evidence="2">
    <location>
        <position position="129"/>
    </location>
    <ligand>
        <name>IMP</name>
        <dbReference type="ChEBI" id="CHEBI:58053"/>
        <note>ligand shared between dimeric partners</note>
    </ligand>
</feature>
<feature type="binding site" evidence="2">
    <location>
        <position position="143"/>
    </location>
    <ligand>
        <name>IMP</name>
        <dbReference type="ChEBI" id="CHEBI:58053"/>
        <note>ligand shared between dimeric partners</note>
    </ligand>
</feature>
<feature type="binding site" description="in other chain" evidence="2">
    <location>
        <position position="221"/>
    </location>
    <ligand>
        <name>IMP</name>
        <dbReference type="ChEBI" id="CHEBI:58053"/>
        <note>ligand shared between dimeric partners</note>
    </ligand>
</feature>
<feature type="binding site" description="in other chain" evidence="2">
    <location>
        <position position="236"/>
    </location>
    <ligand>
        <name>IMP</name>
        <dbReference type="ChEBI" id="CHEBI:58053"/>
        <note>ligand shared between dimeric partners</note>
    </ligand>
</feature>
<feature type="binding site" evidence="2">
    <location>
        <begin position="296"/>
        <end position="302"/>
    </location>
    <ligand>
        <name>substrate</name>
    </ligand>
</feature>
<feature type="binding site" description="in other chain" evidence="2">
    <location>
        <position position="300"/>
    </location>
    <ligand>
        <name>IMP</name>
        <dbReference type="ChEBI" id="CHEBI:58053"/>
        <note>ligand shared between dimeric partners</note>
    </ligand>
</feature>
<feature type="binding site" evidence="2">
    <location>
        <position position="302"/>
    </location>
    <ligand>
        <name>GTP</name>
        <dbReference type="ChEBI" id="CHEBI:37565"/>
    </ligand>
</feature>
<feature type="binding site" evidence="2">
    <location>
        <begin position="328"/>
        <end position="330"/>
    </location>
    <ligand>
        <name>GTP</name>
        <dbReference type="ChEBI" id="CHEBI:37565"/>
    </ligand>
</feature>
<feature type="binding site" evidence="2">
    <location>
        <begin position="412"/>
        <end position="414"/>
    </location>
    <ligand>
        <name>GTP</name>
        <dbReference type="ChEBI" id="CHEBI:37565"/>
    </ligand>
</feature>
<reference key="1">
    <citation type="journal article" date="2003" name="Nature">
        <title>The genome sequence of the filamentous fungus Neurospora crassa.</title>
        <authorList>
            <person name="Galagan J.E."/>
            <person name="Calvo S.E."/>
            <person name="Borkovich K.A."/>
            <person name="Selker E.U."/>
            <person name="Read N.D."/>
            <person name="Jaffe D.B."/>
            <person name="FitzHugh W."/>
            <person name="Ma L.-J."/>
            <person name="Smirnov S."/>
            <person name="Purcell S."/>
            <person name="Rehman B."/>
            <person name="Elkins T."/>
            <person name="Engels R."/>
            <person name="Wang S."/>
            <person name="Nielsen C.B."/>
            <person name="Butler J."/>
            <person name="Endrizzi M."/>
            <person name="Qui D."/>
            <person name="Ianakiev P."/>
            <person name="Bell-Pedersen D."/>
            <person name="Nelson M.A."/>
            <person name="Werner-Washburne M."/>
            <person name="Selitrennikoff C.P."/>
            <person name="Kinsey J.A."/>
            <person name="Braun E.L."/>
            <person name="Zelter A."/>
            <person name="Schulte U."/>
            <person name="Kothe G.O."/>
            <person name="Jedd G."/>
            <person name="Mewes H.-W."/>
            <person name="Staben C."/>
            <person name="Marcotte E."/>
            <person name="Greenberg D."/>
            <person name="Roy A."/>
            <person name="Foley K."/>
            <person name="Naylor J."/>
            <person name="Stange-Thomann N."/>
            <person name="Barrett R."/>
            <person name="Gnerre S."/>
            <person name="Kamal M."/>
            <person name="Kamvysselis M."/>
            <person name="Mauceli E.W."/>
            <person name="Bielke C."/>
            <person name="Rudd S."/>
            <person name="Frishman D."/>
            <person name="Krystofova S."/>
            <person name="Rasmussen C."/>
            <person name="Metzenberg R.L."/>
            <person name="Perkins D.D."/>
            <person name="Kroken S."/>
            <person name="Cogoni C."/>
            <person name="Macino G."/>
            <person name="Catcheside D.E.A."/>
            <person name="Li W."/>
            <person name="Pratt R.J."/>
            <person name="Osmani S.A."/>
            <person name="DeSouza C.P.C."/>
            <person name="Glass N.L."/>
            <person name="Orbach M.J."/>
            <person name="Berglund J.A."/>
            <person name="Voelker R."/>
            <person name="Yarden O."/>
            <person name="Plamann M."/>
            <person name="Seiler S."/>
            <person name="Dunlap J.C."/>
            <person name="Radford A."/>
            <person name="Aramayo R."/>
            <person name="Natvig D.O."/>
            <person name="Alex L.A."/>
            <person name="Mannhaupt G."/>
            <person name="Ebbole D.J."/>
            <person name="Freitag M."/>
            <person name="Paulsen I."/>
            <person name="Sachs M.S."/>
            <person name="Lander E.S."/>
            <person name="Nusbaum C."/>
            <person name="Birren B.W."/>
        </authorList>
    </citation>
    <scope>NUCLEOTIDE SEQUENCE [LARGE SCALE GENOMIC DNA]</scope>
    <source>
        <strain>ATCC 24698 / 74-OR23-1A / CBS 708.71 / DSM 1257 / FGSC 987</strain>
    </source>
</reference>
<protein>
    <recommendedName>
        <fullName evidence="2">Adenylosuccinate synthetase</fullName>
        <shortName evidence="2">AMPSase</shortName>
        <shortName evidence="2">AdSS</shortName>
        <ecNumber evidence="2">6.3.4.4</ecNumber>
    </recommendedName>
    <alternativeName>
        <fullName evidence="2">IMP--aspartate ligase</fullName>
    </alternativeName>
</protein>
<accession>Q7S604</accession>
<keyword id="KW-0963">Cytoplasm</keyword>
<keyword id="KW-0342">GTP-binding</keyword>
<keyword id="KW-0436">Ligase</keyword>
<keyword id="KW-0460">Magnesium</keyword>
<keyword id="KW-0479">Metal-binding</keyword>
<keyword id="KW-0547">Nucleotide-binding</keyword>
<keyword id="KW-0658">Purine biosynthesis</keyword>
<keyword id="KW-1185">Reference proteome</keyword>
<gene>
    <name type="ORF">NCU09789</name>
</gene>
<sequence>MATLILGSQWGDEGKGKLTDILCPKAQICARAAGGHNAGHSIVANGVEYDFHLLPSGLVNPNCMNLIGSSVVFHVPSFFSELSKLEEKGLTDVHNRILVSDRCHVNFDLHAAVDGLEEVELGDRKIGTTGRGIGPSYSTKMARSGVRIHEIFNEEIFERKLRQLAAGYKKRFGDLLKYDVEEEIARFKEYRVKLARYTVDAIQYMKEAQDRGYKILIEGANALMLDIDYGTYPYVTSSNTGLGGIITGLAINPTKIDNIIGVVKAYTTRVGGGPFKTEDLEEAGTKLQEIGREWGVSTGRKRRCGWLDLVVLKYSTAINNYTALNLTKLDILDTFETIKVAVAYKDPQTGEEVEYFPADLDILDSLEVVYKELPGWNKPITDCKTYYDLPKEARAYIEFIEEFVGVPICYIGTGPKREDMIVRKTSAIKE</sequence>
<proteinExistence type="inferred from homology"/>
<evidence type="ECO:0000250" key="1"/>
<evidence type="ECO:0000255" key="2">
    <source>
        <dbReference type="HAMAP-Rule" id="MF_03125"/>
    </source>
</evidence>
<organism>
    <name type="scientific">Neurospora crassa (strain ATCC 24698 / 74-OR23-1A / CBS 708.71 / DSM 1257 / FGSC 987)</name>
    <dbReference type="NCBI Taxonomy" id="367110"/>
    <lineage>
        <taxon>Eukaryota</taxon>
        <taxon>Fungi</taxon>
        <taxon>Dikarya</taxon>
        <taxon>Ascomycota</taxon>
        <taxon>Pezizomycotina</taxon>
        <taxon>Sordariomycetes</taxon>
        <taxon>Sordariomycetidae</taxon>
        <taxon>Sordariales</taxon>
        <taxon>Sordariaceae</taxon>
        <taxon>Neurospora</taxon>
    </lineage>
</organism>
<dbReference type="EC" id="6.3.4.4" evidence="2"/>
<dbReference type="EMBL" id="CM002241">
    <property type="protein sequence ID" value="EAA30951.1"/>
    <property type="molecule type" value="Genomic_DNA"/>
</dbReference>
<dbReference type="SMR" id="Q7S604"/>
<dbReference type="FunCoup" id="Q7S604">
    <property type="interactions" value="777"/>
</dbReference>
<dbReference type="STRING" id="367110.Q7S604"/>
<dbReference type="PaxDb" id="5141-EFNCRP00000009544"/>
<dbReference type="EnsemblFungi" id="EAA30951">
    <property type="protein sequence ID" value="EAA30951"/>
    <property type="gene ID" value="NCU09789"/>
</dbReference>
<dbReference type="KEGG" id="ncr:NCU09789"/>
<dbReference type="VEuPathDB" id="FungiDB:NCU09789"/>
<dbReference type="HOGENOM" id="CLU_029848_3_2_1"/>
<dbReference type="InParanoid" id="Q7S604"/>
<dbReference type="OMA" id="FHHAKPI"/>
<dbReference type="OrthoDB" id="10265645at2759"/>
<dbReference type="UniPathway" id="UPA00075">
    <property type="reaction ID" value="UER00335"/>
</dbReference>
<dbReference type="Proteomes" id="UP000001805">
    <property type="component" value="Chromosome 5, Linkage Group VI"/>
</dbReference>
<dbReference type="GO" id="GO:0005737">
    <property type="term" value="C:cytoplasm"/>
    <property type="evidence" value="ECO:0000318"/>
    <property type="project" value="GO_Central"/>
</dbReference>
<dbReference type="GO" id="GO:0004019">
    <property type="term" value="F:adenylosuccinate synthase activity"/>
    <property type="evidence" value="ECO:0000318"/>
    <property type="project" value="GO_Central"/>
</dbReference>
<dbReference type="GO" id="GO:0016208">
    <property type="term" value="F:AMP binding"/>
    <property type="evidence" value="ECO:0007669"/>
    <property type="project" value="EnsemblFungi"/>
</dbReference>
<dbReference type="GO" id="GO:0019002">
    <property type="term" value="F:GMP binding"/>
    <property type="evidence" value="ECO:0007669"/>
    <property type="project" value="EnsemblFungi"/>
</dbReference>
<dbReference type="GO" id="GO:0005525">
    <property type="term" value="F:GTP binding"/>
    <property type="evidence" value="ECO:0007669"/>
    <property type="project" value="UniProtKB-UniRule"/>
</dbReference>
<dbReference type="GO" id="GO:0000287">
    <property type="term" value="F:magnesium ion binding"/>
    <property type="evidence" value="ECO:0007669"/>
    <property type="project" value="UniProtKB-UniRule"/>
</dbReference>
<dbReference type="GO" id="GO:0044208">
    <property type="term" value="P:'de novo' AMP biosynthetic process"/>
    <property type="evidence" value="ECO:0000318"/>
    <property type="project" value="GO_Central"/>
</dbReference>
<dbReference type="GO" id="GO:0071276">
    <property type="term" value="P:cellular response to cadmium ion"/>
    <property type="evidence" value="ECO:0007669"/>
    <property type="project" value="EnsemblFungi"/>
</dbReference>
<dbReference type="GO" id="GO:0046040">
    <property type="term" value="P:IMP metabolic process"/>
    <property type="evidence" value="ECO:0000318"/>
    <property type="project" value="GO_Central"/>
</dbReference>
<dbReference type="CDD" id="cd03108">
    <property type="entry name" value="AdSS"/>
    <property type="match status" value="1"/>
</dbReference>
<dbReference type="FunFam" id="1.10.300.10:FF:000001">
    <property type="entry name" value="Adenylosuccinate synthetase"/>
    <property type="match status" value="1"/>
</dbReference>
<dbReference type="FunFam" id="3.90.170.10:FF:000001">
    <property type="entry name" value="Adenylosuccinate synthetase"/>
    <property type="match status" value="1"/>
</dbReference>
<dbReference type="Gene3D" id="3.40.440.10">
    <property type="entry name" value="Adenylosuccinate Synthetase, subunit A, domain 1"/>
    <property type="match status" value="1"/>
</dbReference>
<dbReference type="Gene3D" id="1.10.300.10">
    <property type="entry name" value="Adenylosuccinate Synthetase, subunit A, domain 2"/>
    <property type="match status" value="1"/>
</dbReference>
<dbReference type="Gene3D" id="3.90.170.10">
    <property type="entry name" value="Adenylosuccinate Synthetase, subunit A, domain 3"/>
    <property type="match status" value="1"/>
</dbReference>
<dbReference type="HAMAP" id="MF_00011">
    <property type="entry name" value="Adenylosucc_synth"/>
    <property type="match status" value="1"/>
</dbReference>
<dbReference type="InterPro" id="IPR018220">
    <property type="entry name" value="Adenylosuccin_syn_GTP-bd"/>
</dbReference>
<dbReference type="InterPro" id="IPR033128">
    <property type="entry name" value="Adenylosuccin_syn_Lys_AS"/>
</dbReference>
<dbReference type="InterPro" id="IPR042109">
    <property type="entry name" value="Adenylosuccinate_synth_dom1"/>
</dbReference>
<dbReference type="InterPro" id="IPR042110">
    <property type="entry name" value="Adenylosuccinate_synth_dom2"/>
</dbReference>
<dbReference type="InterPro" id="IPR042111">
    <property type="entry name" value="Adenylosuccinate_synth_dom3"/>
</dbReference>
<dbReference type="InterPro" id="IPR001114">
    <property type="entry name" value="Adenylosuccinate_synthetase"/>
</dbReference>
<dbReference type="InterPro" id="IPR027417">
    <property type="entry name" value="P-loop_NTPase"/>
</dbReference>
<dbReference type="NCBIfam" id="NF002223">
    <property type="entry name" value="PRK01117.1"/>
    <property type="match status" value="1"/>
</dbReference>
<dbReference type="NCBIfam" id="TIGR00184">
    <property type="entry name" value="purA"/>
    <property type="match status" value="1"/>
</dbReference>
<dbReference type="PANTHER" id="PTHR11846">
    <property type="entry name" value="ADENYLOSUCCINATE SYNTHETASE"/>
    <property type="match status" value="1"/>
</dbReference>
<dbReference type="PANTHER" id="PTHR11846:SF0">
    <property type="entry name" value="ADENYLOSUCCINATE SYNTHETASE"/>
    <property type="match status" value="1"/>
</dbReference>
<dbReference type="Pfam" id="PF00709">
    <property type="entry name" value="Adenylsucc_synt"/>
    <property type="match status" value="1"/>
</dbReference>
<dbReference type="SMART" id="SM00788">
    <property type="entry name" value="Adenylsucc_synt"/>
    <property type="match status" value="1"/>
</dbReference>
<dbReference type="SUPFAM" id="SSF52540">
    <property type="entry name" value="P-loop containing nucleoside triphosphate hydrolases"/>
    <property type="match status" value="1"/>
</dbReference>
<dbReference type="PROSITE" id="PS01266">
    <property type="entry name" value="ADENYLOSUCCIN_SYN_1"/>
    <property type="match status" value="1"/>
</dbReference>
<dbReference type="PROSITE" id="PS00513">
    <property type="entry name" value="ADENYLOSUCCIN_SYN_2"/>
    <property type="match status" value="1"/>
</dbReference>
<comment type="function">
    <text evidence="1">Plays an important role in the de novo pathway and in the salvage pathway of purine nucleotide biosynthesis. Catalyzes the first committed step in the biosynthesis of AMP from IMP (By similarity).</text>
</comment>
<comment type="catalytic activity">
    <reaction evidence="2">
        <text>IMP + L-aspartate + GTP = N(6)-(1,2-dicarboxyethyl)-AMP + GDP + phosphate + 2 H(+)</text>
        <dbReference type="Rhea" id="RHEA:15753"/>
        <dbReference type="ChEBI" id="CHEBI:15378"/>
        <dbReference type="ChEBI" id="CHEBI:29991"/>
        <dbReference type="ChEBI" id="CHEBI:37565"/>
        <dbReference type="ChEBI" id="CHEBI:43474"/>
        <dbReference type="ChEBI" id="CHEBI:57567"/>
        <dbReference type="ChEBI" id="CHEBI:58053"/>
        <dbReference type="ChEBI" id="CHEBI:58189"/>
        <dbReference type="EC" id="6.3.4.4"/>
    </reaction>
</comment>
<comment type="cofactor">
    <cofactor evidence="2">
        <name>Mg(2+)</name>
        <dbReference type="ChEBI" id="CHEBI:18420"/>
    </cofactor>
    <text evidence="2">Binds 1 Mg(2+) ion per subunit.</text>
</comment>
<comment type="pathway">
    <text evidence="2">Purine metabolism; AMP biosynthesis via de novo pathway; AMP from IMP: step 1/2.</text>
</comment>
<comment type="subunit">
    <text evidence="2">Homodimer.</text>
</comment>
<comment type="subcellular location">
    <subcellularLocation>
        <location evidence="2">Cytoplasm</location>
    </subcellularLocation>
</comment>
<comment type="similarity">
    <text evidence="2">Belongs to the adenylosuccinate synthetase family.</text>
</comment>